<organism>
    <name type="scientific">Pseudoalteromonas translucida (strain TAC 125)</name>
    <dbReference type="NCBI Taxonomy" id="326442"/>
    <lineage>
        <taxon>Bacteria</taxon>
        <taxon>Pseudomonadati</taxon>
        <taxon>Pseudomonadota</taxon>
        <taxon>Gammaproteobacteria</taxon>
        <taxon>Alteromonadales</taxon>
        <taxon>Pseudoalteromonadaceae</taxon>
        <taxon>Pseudoalteromonas</taxon>
    </lineage>
</organism>
<sequence length="270" mass="30980">MNKPFDKLKLHGFNNLTKSLSFSIYDICYAKTEQQRKEYIEYIDEQYSADRLTDILGEVVDIIGANILNVARQDYEPQGASVTILVSEEPVEEQQNYDADEAPGPLPDSVVAHLDKSHICVHTYPEAHPDDGICTFRADIEVSTCGIISPLKALNFLIHSLESDVVTIDYRVRGFTRDINGVKHYIDHAISSIQNFMTEDTKEAYQMMDVNVYQENLFHTKMMLKETDLNTYLFGLSTDDLSDEEEEEIRSKLTREMQEIFYGRNLPDLD</sequence>
<feature type="chain" id="PRO_0000273599" description="S-adenosylmethionine decarboxylase beta chain" evidence="1">
    <location>
        <begin position="1"/>
        <end position="116"/>
    </location>
</feature>
<feature type="chain" id="PRO_0000273600" description="S-adenosylmethionine decarboxylase alpha chain" evidence="1">
    <location>
        <begin position="117"/>
        <end position="270"/>
    </location>
</feature>
<feature type="active site" description="Schiff-base intermediate with substrate; via pyruvic acid" evidence="1">
    <location>
        <position position="117"/>
    </location>
</feature>
<feature type="active site" description="Proton acceptor; for processing activity" evidence="1">
    <location>
        <position position="122"/>
    </location>
</feature>
<feature type="active site" description="Proton donor; for catalytic activity" evidence="1">
    <location>
        <position position="145"/>
    </location>
</feature>
<feature type="site" description="Cleavage (non-hydrolytic); by autolysis" evidence="1">
    <location>
        <begin position="116"/>
        <end position="117"/>
    </location>
</feature>
<feature type="modified residue" description="Pyruvic acid (Ser); by autocatalysis" evidence="1">
    <location>
        <position position="117"/>
    </location>
</feature>
<name>SPED_PSET1</name>
<reference key="1">
    <citation type="journal article" date="2005" name="Genome Res.">
        <title>Coping with cold: the genome of the versatile marine Antarctica bacterium Pseudoalteromonas haloplanktis TAC125.</title>
        <authorList>
            <person name="Medigue C."/>
            <person name="Krin E."/>
            <person name="Pascal G."/>
            <person name="Barbe V."/>
            <person name="Bernsel A."/>
            <person name="Bertin P.N."/>
            <person name="Cheung F."/>
            <person name="Cruveiller S."/>
            <person name="D'Amico S."/>
            <person name="Duilio A."/>
            <person name="Fang G."/>
            <person name="Feller G."/>
            <person name="Ho C."/>
            <person name="Mangenot S."/>
            <person name="Marino G."/>
            <person name="Nilsson J."/>
            <person name="Parrilli E."/>
            <person name="Rocha E.P.C."/>
            <person name="Rouy Z."/>
            <person name="Sekowska A."/>
            <person name="Tutino M.L."/>
            <person name="Vallenet D."/>
            <person name="von Heijne G."/>
            <person name="Danchin A."/>
        </authorList>
    </citation>
    <scope>NUCLEOTIDE SEQUENCE [LARGE SCALE GENOMIC DNA]</scope>
    <source>
        <strain>TAC 125</strain>
    </source>
</reference>
<comment type="function">
    <text evidence="1">Catalyzes the decarboxylation of S-adenosylmethionine to S-adenosylmethioninamine (dcAdoMet), the propylamine donor required for the synthesis of the polyamines spermine and spermidine from the diamine putrescine.</text>
</comment>
<comment type="catalytic activity">
    <reaction evidence="1">
        <text>S-adenosyl-L-methionine + H(+) = S-adenosyl 3-(methylsulfanyl)propylamine + CO2</text>
        <dbReference type="Rhea" id="RHEA:15981"/>
        <dbReference type="ChEBI" id="CHEBI:15378"/>
        <dbReference type="ChEBI" id="CHEBI:16526"/>
        <dbReference type="ChEBI" id="CHEBI:57443"/>
        <dbReference type="ChEBI" id="CHEBI:59789"/>
        <dbReference type="EC" id="4.1.1.50"/>
    </reaction>
</comment>
<comment type="cofactor">
    <cofactor evidence="1">
        <name>pyruvate</name>
        <dbReference type="ChEBI" id="CHEBI:15361"/>
    </cofactor>
    <text evidence="1">Binds 1 pyruvoyl group covalently per subunit.</text>
</comment>
<comment type="pathway">
    <text evidence="1">Amine and polyamine biosynthesis; S-adenosylmethioninamine biosynthesis; S-adenosylmethioninamine from S-adenosyl-L-methionine: step 1/1.</text>
</comment>
<comment type="subunit">
    <text evidence="1">Heterooctamer of four alpha and four beta chains arranged as a tetramer of alpha/beta heterodimers.</text>
</comment>
<comment type="PTM">
    <text evidence="1">Is synthesized initially as an inactive proenzyme. Formation of the active enzyme involves a self-maturation process in which the active site pyruvoyl group is generated from an internal serine residue via an autocatalytic post-translational modification. Two non-identical subunits are generated from the proenzyme in this reaction, and the pyruvate is formed at the N-terminus of the alpha chain, which is derived from the carboxyl end of the proenzyme. The post-translation cleavage follows an unusual pathway, termed non-hydrolytic serinolysis, in which the side chain hydroxyl group of the serine supplies its oxygen atom to form the C-terminus of the beta chain, while the remainder of the serine residue undergoes an oxidative deamination to produce ammonia and the pyruvoyl group blocking the N-terminus of the alpha chain.</text>
</comment>
<comment type="similarity">
    <text evidence="1">Belongs to the prokaryotic AdoMetDC family. Type 2 subfamily.</text>
</comment>
<accession>Q3IFT4</accession>
<evidence type="ECO:0000255" key="1">
    <source>
        <dbReference type="HAMAP-Rule" id="MF_00465"/>
    </source>
</evidence>
<proteinExistence type="inferred from homology"/>
<dbReference type="EC" id="4.1.1.50" evidence="1"/>
<dbReference type="EMBL" id="CR954246">
    <property type="protein sequence ID" value="CAI85302.1"/>
    <property type="molecule type" value="Genomic_DNA"/>
</dbReference>
<dbReference type="STRING" id="326442.PSHAa0199"/>
<dbReference type="KEGG" id="pha:PSHAa0199"/>
<dbReference type="eggNOG" id="COG1586">
    <property type="taxonomic scope" value="Bacteria"/>
</dbReference>
<dbReference type="HOGENOM" id="CLU_092007_0_0_6"/>
<dbReference type="BioCyc" id="PHAL326442:PSHA_RS01000-MONOMER"/>
<dbReference type="UniPathway" id="UPA00331">
    <property type="reaction ID" value="UER00451"/>
</dbReference>
<dbReference type="Proteomes" id="UP000006843">
    <property type="component" value="Chromosome I"/>
</dbReference>
<dbReference type="GO" id="GO:0005829">
    <property type="term" value="C:cytosol"/>
    <property type="evidence" value="ECO:0007669"/>
    <property type="project" value="TreeGrafter"/>
</dbReference>
<dbReference type="GO" id="GO:0004014">
    <property type="term" value="F:adenosylmethionine decarboxylase activity"/>
    <property type="evidence" value="ECO:0007669"/>
    <property type="project" value="UniProtKB-UniRule"/>
</dbReference>
<dbReference type="GO" id="GO:0008295">
    <property type="term" value="P:spermidine biosynthetic process"/>
    <property type="evidence" value="ECO:0007669"/>
    <property type="project" value="UniProtKB-UniRule"/>
</dbReference>
<dbReference type="FunFam" id="3.60.90.10:FF:000001">
    <property type="entry name" value="S-adenosylmethionine decarboxylase proenzyme"/>
    <property type="match status" value="1"/>
</dbReference>
<dbReference type="Gene3D" id="3.60.90.10">
    <property type="entry name" value="S-adenosylmethionine decarboxylase"/>
    <property type="match status" value="1"/>
</dbReference>
<dbReference type="HAMAP" id="MF_00465">
    <property type="entry name" value="AdoMetDC_2"/>
    <property type="match status" value="1"/>
</dbReference>
<dbReference type="InterPro" id="IPR003826">
    <property type="entry name" value="AdoMetDC_fam_prok"/>
</dbReference>
<dbReference type="InterPro" id="IPR009165">
    <property type="entry name" value="S-AdoMet_deCO2ase_bac"/>
</dbReference>
<dbReference type="InterPro" id="IPR016067">
    <property type="entry name" value="S-AdoMet_deCO2ase_core"/>
</dbReference>
<dbReference type="NCBIfam" id="TIGR03331">
    <property type="entry name" value="SAM_DCase_Eco"/>
    <property type="match status" value="1"/>
</dbReference>
<dbReference type="PANTHER" id="PTHR33866">
    <property type="entry name" value="S-ADENOSYLMETHIONINE DECARBOXYLASE PROENZYME"/>
    <property type="match status" value="1"/>
</dbReference>
<dbReference type="PANTHER" id="PTHR33866:SF1">
    <property type="entry name" value="S-ADENOSYLMETHIONINE DECARBOXYLASE PROENZYME"/>
    <property type="match status" value="1"/>
</dbReference>
<dbReference type="Pfam" id="PF02675">
    <property type="entry name" value="AdoMet_dc"/>
    <property type="match status" value="1"/>
</dbReference>
<dbReference type="PIRSF" id="PIRSF001356">
    <property type="entry name" value="SAM_decarboxylas"/>
    <property type="match status" value="1"/>
</dbReference>
<dbReference type="SUPFAM" id="SSF56276">
    <property type="entry name" value="S-adenosylmethionine decarboxylase"/>
    <property type="match status" value="1"/>
</dbReference>
<gene>
    <name evidence="1" type="primary">speD</name>
    <name type="ordered locus">PSHAa0199</name>
</gene>
<protein>
    <recommendedName>
        <fullName evidence="1">S-adenosylmethionine decarboxylase proenzyme</fullName>
        <shortName evidence="1">AdoMetDC</shortName>
        <shortName evidence="1">SAMDC</shortName>
        <ecNumber evidence="1">4.1.1.50</ecNumber>
    </recommendedName>
    <component>
        <recommendedName>
            <fullName evidence="1">S-adenosylmethionine decarboxylase beta chain</fullName>
        </recommendedName>
    </component>
    <component>
        <recommendedName>
            <fullName evidence="1">S-adenosylmethionine decarboxylase alpha chain</fullName>
        </recommendedName>
    </component>
</protein>
<keyword id="KW-0068">Autocatalytic cleavage</keyword>
<keyword id="KW-0210">Decarboxylase</keyword>
<keyword id="KW-0456">Lyase</keyword>
<keyword id="KW-0620">Polyamine biosynthesis</keyword>
<keyword id="KW-0670">Pyruvate</keyword>
<keyword id="KW-1185">Reference proteome</keyword>
<keyword id="KW-0949">S-adenosyl-L-methionine</keyword>
<keyword id="KW-0704">Schiff base</keyword>
<keyword id="KW-0745">Spermidine biosynthesis</keyword>
<keyword id="KW-0865">Zymogen</keyword>